<protein>
    <recommendedName>
        <fullName>N-glycosylase/DNA lyase OGG1</fullName>
    </recommendedName>
    <domain>
        <recommendedName>
            <fullName>8-oxoguanine DNA glycosylase 1</fullName>
            <shortName>AtOGG1</shortName>
            <ecNumber>3.2.2.-</ecNumber>
        </recommendedName>
    </domain>
    <domain>
        <recommendedName>
            <fullName>DNA-(apurinic or apyrimidinic site) lyase</fullName>
            <shortName>AP lyase</shortName>
            <ecNumber evidence="3 4 5">4.2.99.18</ecNumber>
        </recommendedName>
    </domain>
</protein>
<accession>Q9FNY7</accession>
<accession>Q9XI06</accession>
<sequence length="365" mass="40283">MKRPRPTSQPSISSTVKPPLSPPVTPILKQKLHRTGTPKWFPLKLTHTELTLPLTFPTGQTFRWKKTGAIQYSGTIGPHLVSLRQRPGDDAVSYCVHCSTSPKSAELALLDFLNAEISLAELWSDFSKKDPRFGELARHLRGARVLRQDPLECLIQFLCSSNNNIARITKMVDFVSSLGLHLGDIDGFEFHQFPSLDRLSRVSEEEFRKAGFGYRAKYITGTVNALQAKPGGGNEWLLSLRKVELQEAVAALCTLPGVGPKVAACIALFSLDQHSAIPVDTHVWQIATNYLLPDLAGAKLTPKLHGRVAEAFVSKYGEYAGWAQTLLFIAELPAQKTLLQSFSQPINKLDESAEVNETSCDTLKP</sequence>
<evidence type="ECO:0000250" key="1"/>
<evidence type="ECO:0000256" key="2">
    <source>
        <dbReference type="SAM" id="MobiDB-lite"/>
    </source>
</evidence>
<evidence type="ECO:0000269" key="3">
    <source>
    </source>
</evidence>
<evidence type="ECO:0000269" key="4">
    <source>
    </source>
</evidence>
<evidence type="ECO:0000269" key="5">
    <source>
    </source>
</evidence>
<evidence type="ECO:0000269" key="6">
    <source>
    </source>
</evidence>
<evidence type="ECO:0000269" key="7">
    <source ref="8"/>
</evidence>
<evidence type="ECO:0000305" key="8"/>
<evidence type="ECO:0000305" key="9">
    <source>
    </source>
</evidence>
<dbReference type="EC" id="3.2.2.-"/>
<dbReference type="EC" id="4.2.99.18" evidence="3 4 5"/>
<dbReference type="EMBL" id="AJ277400">
    <property type="protein sequence ID" value="CAC19363.1"/>
    <property type="molecule type" value="mRNA"/>
</dbReference>
<dbReference type="EMBL" id="AJ302082">
    <property type="protein sequence ID" value="CAC83625.1"/>
    <property type="molecule type" value="mRNA"/>
</dbReference>
<dbReference type="EMBL" id="AC007727">
    <property type="protein sequence ID" value="AAD41425.1"/>
    <property type="status" value="ALT_SEQ"/>
    <property type="molecule type" value="Genomic_DNA"/>
</dbReference>
<dbReference type="EMBL" id="CP002684">
    <property type="protein sequence ID" value="AEE30145.1"/>
    <property type="molecule type" value="Genomic_DNA"/>
</dbReference>
<dbReference type="EMBL" id="AK176524">
    <property type="protein sequence ID" value="BAD44287.1"/>
    <property type="molecule type" value="mRNA"/>
</dbReference>
<dbReference type="EMBL" id="BT025249">
    <property type="protein sequence ID" value="ABF19002.1"/>
    <property type="molecule type" value="mRNA"/>
</dbReference>
<dbReference type="PIR" id="E86350">
    <property type="entry name" value="E86350"/>
</dbReference>
<dbReference type="RefSeq" id="NP_173590.1">
    <property type="nucleotide sequence ID" value="NM_102020.4"/>
</dbReference>
<dbReference type="SMR" id="Q9FNY7"/>
<dbReference type="FunCoup" id="Q9FNY7">
    <property type="interactions" value="3586"/>
</dbReference>
<dbReference type="STRING" id="3702.Q9FNY7"/>
<dbReference type="PaxDb" id="3702-AT1G21710.1"/>
<dbReference type="ProteomicsDB" id="250902"/>
<dbReference type="EnsemblPlants" id="AT1G21710.1">
    <property type="protein sequence ID" value="AT1G21710.1"/>
    <property type="gene ID" value="AT1G21710"/>
</dbReference>
<dbReference type="GeneID" id="838775"/>
<dbReference type="Gramene" id="AT1G21710.1">
    <property type="protein sequence ID" value="AT1G21710.1"/>
    <property type="gene ID" value="AT1G21710"/>
</dbReference>
<dbReference type="KEGG" id="ath:AT1G21710"/>
<dbReference type="Araport" id="AT1G21710"/>
<dbReference type="TAIR" id="AT1G21710">
    <property type="gene designation" value="OGG1"/>
</dbReference>
<dbReference type="eggNOG" id="KOG2875">
    <property type="taxonomic scope" value="Eukaryota"/>
</dbReference>
<dbReference type="HOGENOM" id="CLU_027543_3_1_1"/>
<dbReference type="InParanoid" id="Q9FNY7"/>
<dbReference type="OMA" id="GYAQEYL"/>
<dbReference type="PhylomeDB" id="Q9FNY7"/>
<dbReference type="PRO" id="PR:Q9FNY7"/>
<dbReference type="Proteomes" id="UP000006548">
    <property type="component" value="Chromosome 1"/>
</dbReference>
<dbReference type="ExpressionAtlas" id="Q9FNY7">
    <property type="expression patterns" value="baseline and differential"/>
</dbReference>
<dbReference type="GO" id="GO:0005634">
    <property type="term" value="C:nucleus"/>
    <property type="evidence" value="ECO:0007669"/>
    <property type="project" value="UniProtKB-SubCell"/>
</dbReference>
<dbReference type="GO" id="GO:0140078">
    <property type="term" value="F:class I DNA-(apurinic or apyrimidinic site) endonuclease activity"/>
    <property type="evidence" value="ECO:0007669"/>
    <property type="project" value="UniProtKB-EC"/>
</dbReference>
<dbReference type="GO" id="GO:0003684">
    <property type="term" value="F:damaged DNA binding"/>
    <property type="evidence" value="ECO:0007669"/>
    <property type="project" value="InterPro"/>
</dbReference>
<dbReference type="GO" id="GO:0008534">
    <property type="term" value="F:oxidized purine nucleobase lesion DNA N-glycosylase activity"/>
    <property type="evidence" value="ECO:0000314"/>
    <property type="project" value="TAIR"/>
</dbReference>
<dbReference type="GO" id="GO:0006284">
    <property type="term" value="P:base-excision repair"/>
    <property type="evidence" value="ECO:0007669"/>
    <property type="project" value="InterPro"/>
</dbReference>
<dbReference type="GO" id="GO:0006281">
    <property type="term" value="P:DNA repair"/>
    <property type="evidence" value="ECO:0000314"/>
    <property type="project" value="TAIR"/>
</dbReference>
<dbReference type="GO" id="GO:0006289">
    <property type="term" value="P:nucleotide-excision repair"/>
    <property type="evidence" value="ECO:0007669"/>
    <property type="project" value="InterPro"/>
</dbReference>
<dbReference type="CDD" id="cd00056">
    <property type="entry name" value="ENDO3c"/>
    <property type="match status" value="1"/>
</dbReference>
<dbReference type="FunFam" id="1.10.340.30:FF:000012">
    <property type="entry name" value="N-glycosylase/DNA lyase"/>
    <property type="match status" value="1"/>
</dbReference>
<dbReference type="FunFam" id="1.10.1670.10:FF:000005">
    <property type="entry name" value="N-glycosylase/DNA lyase OGG1"/>
    <property type="match status" value="1"/>
</dbReference>
<dbReference type="FunFam" id="3.30.310.40:FF:000003">
    <property type="entry name" value="N-glycosylase/DNA lyase OGG1"/>
    <property type="match status" value="1"/>
</dbReference>
<dbReference type="Gene3D" id="3.30.310.40">
    <property type="match status" value="1"/>
</dbReference>
<dbReference type="Gene3D" id="1.10.1670.10">
    <property type="entry name" value="Helix-hairpin-Helix base-excision DNA repair enzymes (C-terminal)"/>
    <property type="match status" value="1"/>
</dbReference>
<dbReference type="Gene3D" id="1.10.340.30">
    <property type="entry name" value="Hypothetical protein, domain 2"/>
    <property type="match status" value="1"/>
</dbReference>
<dbReference type="InterPro" id="IPR011257">
    <property type="entry name" value="DNA_glycosylase"/>
</dbReference>
<dbReference type="InterPro" id="IPR003265">
    <property type="entry name" value="HhH-GPD_domain"/>
</dbReference>
<dbReference type="InterPro" id="IPR023170">
    <property type="entry name" value="HhH_base_excis_C"/>
</dbReference>
<dbReference type="InterPro" id="IPR012904">
    <property type="entry name" value="OGG_N"/>
</dbReference>
<dbReference type="InterPro" id="IPR052054">
    <property type="entry name" value="Oxidative_DNA_repair_enzyme"/>
</dbReference>
<dbReference type="PANTHER" id="PTHR10242">
    <property type="entry name" value="8-OXOGUANINE DNA GLYCOSYLASE"/>
    <property type="match status" value="1"/>
</dbReference>
<dbReference type="PANTHER" id="PTHR10242:SF2">
    <property type="entry name" value="N-GLYCOSYLASE_DNA LYASE"/>
    <property type="match status" value="1"/>
</dbReference>
<dbReference type="Pfam" id="PF00730">
    <property type="entry name" value="HhH-GPD"/>
    <property type="match status" value="1"/>
</dbReference>
<dbReference type="Pfam" id="PF07934">
    <property type="entry name" value="OGG_N"/>
    <property type="match status" value="1"/>
</dbReference>
<dbReference type="SMART" id="SM00478">
    <property type="entry name" value="ENDO3c"/>
    <property type="match status" value="1"/>
</dbReference>
<dbReference type="SUPFAM" id="SSF48150">
    <property type="entry name" value="DNA-glycosylase"/>
    <property type="match status" value="1"/>
</dbReference>
<dbReference type="SUPFAM" id="SSF55945">
    <property type="entry name" value="TATA-box binding protein-like"/>
    <property type="match status" value="1"/>
</dbReference>
<name>OGG1_ARATH</name>
<reference key="1">
    <citation type="journal article" date="2001" name="Mol. Genet. Genomics">
        <title>A functional OGG1 homologue from Arabidopsis thaliana.</title>
        <authorList>
            <person name="Dany A.L."/>
            <person name="Tissier A."/>
        </authorList>
    </citation>
    <scope>NUCLEOTIDE SEQUENCE [MRNA]</scope>
    <scope>FUNCTION</scope>
    <scope>CATALYTIC ACTIVITY</scope>
    <source>
        <strain>cv. Columbia</strain>
    </source>
</reference>
<reference key="2">
    <citation type="journal article" date="2001" name="Plant Mol. Biol.">
        <title>An OGG1 orthologue encoding a functional 8-oxoguanine DNA glycosylase/lyase in Arabidopsis thaliana.</title>
        <authorList>
            <person name="Garcia-Ortiz V."/>
            <person name="Ariza R."/>
            <person name="Roldan-Arjona T."/>
        </authorList>
    </citation>
    <scope>NUCLEOTIDE SEQUENCE [MRNA]</scope>
    <scope>FUNCTION</scope>
    <scope>CATALYTIC ACTIVITY</scope>
    <scope>TISSUE SPECIFICITY</scope>
</reference>
<reference key="3">
    <citation type="journal article" date="2000" name="Nature">
        <title>Sequence and analysis of chromosome 1 of the plant Arabidopsis thaliana.</title>
        <authorList>
            <person name="Theologis A."/>
            <person name="Ecker J.R."/>
            <person name="Palm C.J."/>
            <person name="Federspiel N.A."/>
            <person name="Kaul S."/>
            <person name="White O."/>
            <person name="Alonso J."/>
            <person name="Altafi H."/>
            <person name="Araujo R."/>
            <person name="Bowman C.L."/>
            <person name="Brooks S.Y."/>
            <person name="Buehler E."/>
            <person name="Chan A."/>
            <person name="Chao Q."/>
            <person name="Chen H."/>
            <person name="Cheuk R.F."/>
            <person name="Chin C.W."/>
            <person name="Chung M.K."/>
            <person name="Conn L."/>
            <person name="Conway A.B."/>
            <person name="Conway A.R."/>
            <person name="Creasy T.H."/>
            <person name="Dewar K."/>
            <person name="Dunn P."/>
            <person name="Etgu P."/>
            <person name="Feldblyum T.V."/>
            <person name="Feng J.-D."/>
            <person name="Fong B."/>
            <person name="Fujii C.Y."/>
            <person name="Gill J.E."/>
            <person name="Goldsmith A.D."/>
            <person name="Haas B."/>
            <person name="Hansen N.F."/>
            <person name="Hughes B."/>
            <person name="Huizar L."/>
            <person name="Hunter J.L."/>
            <person name="Jenkins J."/>
            <person name="Johnson-Hopson C."/>
            <person name="Khan S."/>
            <person name="Khaykin E."/>
            <person name="Kim C.J."/>
            <person name="Koo H.L."/>
            <person name="Kremenetskaia I."/>
            <person name="Kurtz D.B."/>
            <person name="Kwan A."/>
            <person name="Lam B."/>
            <person name="Langin-Hooper S."/>
            <person name="Lee A."/>
            <person name="Lee J.M."/>
            <person name="Lenz C.A."/>
            <person name="Li J.H."/>
            <person name="Li Y.-P."/>
            <person name="Lin X."/>
            <person name="Liu S.X."/>
            <person name="Liu Z.A."/>
            <person name="Luros J.S."/>
            <person name="Maiti R."/>
            <person name="Marziali A."/>
            <person name="Militscher J."/>
            <person name="Miranda M."/>
            <person name="Nguyen M."/>
            <person name="Nierman W.C."/>
            <person name="Osborne B.I."/>
            <person name="Pai G."/>
            <person name="Peterson J."/>
            <person name="Pham P.K."/>
            <person name="Rizzo M."/>
            <person name="Rooney T."/>
            <person name="Rowley D."/>
            <person name="Sakano H."/>
            <person name="Salzberg S.L."/>
            <person name="Schwartz J.R."/>
            <person name="Shinn P."/>
            <person name="Southwick A.M."/>
            <person name="Sun H."/>
            <person name="Tallon L.J."/>
            <person name="Tambunga G."/>
            <person name="Toriumi M.J."/>
            <person name="Town C.D."/>
            <person name="Utterback T."/>
            <person name="Van Aken S."/>
            <person name="Vaysberg M."/>
            <person name="Vysotskaia V.S."/>
            <person name="Walker M."/>
            <person name="Wu D."/>
            <person name="Yu G."/>
            <person name="Fraser C.M."/>
            <person name="Venter J.C."/>
            <person name="Davis R.W."/>
        </authorList>
    </citation>
    <scope>NUCLEOTIDE SEQUENCE [LARGE SCALE GENOMIC DNA]</scope>
    <source>
        <strain>cv. Columbia</strain>
    </source>
</reference>
<reference key="4">
    <citation type="journal article" date="2017" name="Plant J.">
        <title>Araport11: a complete reannotation of the Arabidopsis thaliana reference genome.</title>
        <authorList>
            <person name="Cheng C.Y."/>
            <person name="Krishnakumar V."/>
            <person name="Chan A.P."/>
            <person name="Thibaud-Nissen F."/>
            <person name="Schobel S."/>
            <person name="Town C.D."/>
        </authorList>
    </citation>
    <scope>GENOME REANNOTATION</scope>
    <source>
        <strain>cv. Columbia</strain>
    </source>
</reference>
<reference key="5">
    <citation type="submission" date="2004-09" db="EMBL/GenBank/DDBJ databases">
        <title>Large-scale analysis of RIKEN Arabidopsis full-length (RAFL) cDNAs.</title>
        <authorList>
            <person name="Totoki Y."/>
            <person name="Seki M."/>
            <person name="Ishida J."/>
            <person name="Nakajima M."/>
            <person name="Enju A."/>
            <person name="Kamiya A."/>
            <person name="Narusaka M."/>
            <person name="Shin-i T."/>
            <person name="Nakagawa M."/>
            <person name="Sakamoto N."/>
            <person name="Oishi K."/>
            <person name="Kohara Y."/>
            <person name="Kobayashi M."/>
            <person name="Toyoda A."/>
            <person name="Sakaki Y."/>
            <person name="Sakurai T."/>
            <person name="Iida K."/>
            <person name="Akiyama K."/>
            <person name="Satou M."/>
            <person name="Toyoda T."/>
            <person name="Konagaya A."/>
            <person name="Carninci P."/>
            <person name="Kawai J."/>
            <person name="Hayashizaki Y."/>
            <person name="Shinozaki K."/>
        </authorList>
    </citation>
    <scope>NUCLEOTIDE SEQUENCE [LARGE SCALE MRNA]</scope>
    <source>
        <strain>cv. Columbia</strain>
    </source>
</reference>
<reference key="6">
    <citation type="submission" date="2006-04" db="EMBL/GenBank/DDBJ databases">
        <title>Arabidopsis ORF clones.</title>
        <authorList>
            <person name="Shinn P."/>
            <person name="Chen H."/>
            <person name="Kim C.J."/>
            <person name="Quinitio C."/>
            <person name="Ecker J.R."/>
        </authorList>
    </citation>
    <scope>NUCLEOTIDE SEQUENCE [LARGE SCALE MRNA]</scope>
    <source>
        <strain>cv. Columbia</strain>
    </source>
</reference>
<reference key="7">
    <citation type="journal article" date="2003" name="Biochemistry">
        <title>Arabidopsis thaliana Ogg1 protein excises 8-hydroxyguanine and 2,6-diamino-4-hydroxy-5-formamidopyrimidine from oxidatively damaged DNA containing multiple lesions.</title>
        <authorList>
            <person name="Morales-Ruiz T."/>
            <person name="Birincioglu M."/>
            <person name="Jaruga P."/>
            <person name="Rodriguez H."/>
            <person name="Roldan-Arjona T."/>
            <person name="Dizdaroglu M."/>
        </authorList>
    </citation>
    <scope>FUNCTION</scope>
    <scope>CATALYTIC ACTIVITY</scope>
    <scope>BIOPHYSICOCHEMICAL PROPERTIES</scope>
</reference>
<reference key="8">
    <citation type="journal article" date="2005" name="Physiol. Plantarum">
        <title>What is base excision repair good for?: knockout mutants for FPG and OGG glycosylase genes in Arabidopsis.</title>
        <authorList>
            <person name="Murphy T.M."/>
        </authorList>
    </citation>
    <scope>DISRUPTION PHENOTYPE</scope>
</reference>
<reference key="9">
    <citation type="journal article" date="2012" name="J. Exp. Bot.">
        <title>Overexpression of AtOGG1, a DNA glycosylase/AP lyase, enhances seed longevity and abiotic stress tolerance in Arabidopsis.</title>
        <authorList>
            <person name="Chen H."/>
            <person name="Chu P."/>
            <person name="Zhou Y."/>
            <person name="Li Y."/>
            <person name="Liu J."/>
            <person name="Ding Y."/>
            <person name="Tsang E.W."/>
            <person name="Jiang L."/>
            <person name="Wu K."/>
            <person name="Huang S."/>
        </authorList>
    </citation>
    <scope>FUNCTION</scope>
    <scope>SUBCELLULAR LOCATION</scope>
    <scope>TISSUE SPECIFICITY</scope>
    <scope>DEVELOPMENTAL STAGE</scope>
</reference>
<gene>
    <name type="primary">OGG1</name>
    <name type="ordered locus">At1g21710</name>
    <name type="ORF">F8K7.14</name>
</gene>
<proteinExistence type="evidence at protein level"/>
<feature type="chain" id="PRO_0000421262" description="N-glycosylase/DNA lyase OGG1">
    <location>
        <begin position="1"/>
        <end position="365"/>
    </location>
</feature>
<feature type="region of interest" description="Disordered" evidence="2">
    <location>
        <begin position="1"/>
        <end position="24"/>
    </location>
</feature>
<feature type="compositionally biased region" description="Polar residues" evidence="2">
    <location>
        <begin position="1"/>
        <end position="16"/>
    </location>
</feature>
<feature type="active site" description="Schiff-base intermediate with DNA" evidence="1">
    <location>
        <position position="261"/>
    </location>
</feature>
<feature type="binding site" evidence="1">
    <location>
        <position position="162"/>
    </location>
    <ligand>
        <name>DNA</name>
        <dbReference type="ChEBI" id="CHEBI:16991"/>
    </ligand>
</feature>
<feature type="binding site" evidence="1">
    <location>
        <position position="167"/>
    </location>
    <ligand>
        <name>DNA</name>
        <dbReference type="ChEBI" id="CHEBI:16991"/>
    </ligand>
</feature>
<feature type="binding site" evidence="1">
    <location>
        <position position="215"/>
    </location>
    <ligand>
        <name>DNA</name>
        <dbReference type="ChEBI" id="CHEBI:16991"/>
    </ligand>
</feature>
<feature type="binding site" evidence="1">
    <location>
        <position position="278"/>
    </location>
    <ligand>
        <name>8-oxoguanine</name>
        <dbReference type="ChEBI" id="CHEBI:52617"/>
    </ligand>
</feature>
<feature type="binding site" evidence="1">
    <location>
        <position position="280"/>
    </location>
    <ligand>
        <name>8-oxoguanine</name>
        <dbReference type="ChEBI" id="CHEBI:52617"/>
    </ligand>
</feature>
<feature type="binding site" evidence="1">
    <location>
        <position position="282"/>
    </location>
    <ligand>
        <name>DNA</name>
        <dbReference type="ChEBI" id="CHEBI:16991"/>
    </ligand>
</feature>
<feature type="binding site" evidence="1">
    <location>
        <position position="324"/>
    </location>
    <ligand>
        <name>8-oxoguanine</name>
        <dbReference type="ChEBI" id="CHEBI:52617"/>
    </ligand>
</feature>
<feature type="binding site" evidence="1">
    <location>
        <position position="328"/>
    </location>
    <ligand>
        <name>8-oxoguanine</name>
        <dbReference type="ChEBI" id="CHEBI:52617"/>
    </ligand>
</feature>
<comment type="function">
    <text evidence="3 4 5 6">Involved in repair of DNA damaged by oxidation by incising DNA at 8-oxoG residues. Excises 7,8-dihydro-8-oxoguanine and 2,6-diamino-4-hydroxy-5-N-methylformamidopyrimidine (Fapy) from damaged DNA. Has a beta-lyase activity that nicks DNA 3' to the lesion.</text>
</comment>
<comment type="catalytic activity">
    <reaction evidence="3 4 5">
        <text>2'-deoxyribonucleotide-(2'-deoxyribose 5'-phosphate)-2'-deoxyribonucleotide-DNA = a 3'-end 2'-deoxyribonucleotide-(2,3-dehydro-2,3-deoxyribose 5'-phosphate)-DNA + a 5'-end 5'-phospho-2'-deoxyribonucleoside-DNA + H(+)</text>
        <dbReference type="Rhea" id="RHEA:66592"/>
        <dbReference type="Rhea" id="RHEA-COMP:13180"/>
        <dbReference type="Rhea" id="RHEA-COMP:16897"/>
        <dbReference type="Rhea" id="RHEA-COMP:17067"/>
        <dbReference type="ChEBI" id="CHEBI:15378"/>
        <dbReference type="ChEBI" id="CHEBI:136412"/>
        <dbReference type="ChEBI" id="CHEBI:157695"/>
        <dbReference type="ChEBI" id="CHEBI:167181"/>
        <dbReference type="EC" id="4.2.99.18"/>
    </reaction>
</comment>
<comment type="biophysicochemical properties">
    <kinetics>
        <KM evidence="5">2.29 uM for 8-hydroxyguanine</KM>
        <KM evidence="5">3.6 uM for 2,6-diamino-4-hydroxy-5-N-methylformamidopyrimidine (Fapy)</KM>
    </kinetics>
</comment>
<comment type="subcellular location">
    <subcellularLocation>
        <location evidence="6">Nucleus</location>
    </subcellularLocation>
</comment>
<comment type="tissue specificity">
    <text evidence="4 6">Expressed in stems, roots, rosette and cauline leaves, flowers and seeds.</text>
</comment>
<comment type="developmental stage">
    <text evidence="6">Expression is induced during seed desiccation and imbibition.</text>
</comment>
<comment type="disruption phenotype">
    <text evidence="7">No visible phenotype under normal growth conditions or UV-A irradiation stress.</text>
</comment>
<comment type="miscellaneous">
    <text evidence="9">Transgenic seeds over-expressing OGG1 exhibit enhanced seed longevity associated with reduced DNA damage, enhanced seed tolerance to abiotic stresses and improved germination performance under abiotic stresses.</text>
</comment>
<comment type="similarity">
    <text evidence="8">Belongs to the type-1 OGG1 family.</text>
</comment>
<comment type="sequence caution" evidence="8">
    <conflict type="erroneous gene model prediction">
        <sequence resource="EMBL-CDS" id="AAD41425"/>
    </conflict>
</comment>
<keyword id="KW-0227">DNA damage</keyword>
<keyword id="KW-0234">DNA repair</keyword>
<keyword id="KW-0238">DNA-binding</keyword>
<keyword id="KW-0326">Glycosidase</keyword>
<keyword id="KW-0378">Hydrolase</keyword>
<keyword id="KW-0456">Lyase</keyword>
<keyword id="KW-0511">Multifunctional enzyme</keyword>
<keyword id="KW-0539">Nucleus</keyword>
<keyword id="KW-1185">Reference proteome</keyword>
<organism>
    <name type="scientific">Arabidopsis thaliana</name>
    <name type="common">Mouse-ear cress</name>
    <dbReference type="NCBI Taxonomy" id="3702"/>
    <lineage>
        <taxon>Eukaryota</taxon>
        <taxon>Viridiplantae</taxon>
        <taxon>Streptophyta</taxon>
        <taxon>Embryophyta</taxon>
        <taxon>Tracheophyta</taxon>
        <taxon>Spermatophyta</taxon>
        <taxon>Magnoliopsida</taxon>
        <taxon>eudicotyledons</taxon>
        <taxon>Gunneridae</taxon>
        <taxon>Pentapetalae</taxon>
        <taxon>rosids</taxon>
        <taxon>malvids</taxon>
        <taxon>Brassicales</taxon>
        <taxon>Brassicaceae</taxon>
        <taxon>Camelineae</taxon>
        <taxon>Arabidopsis</taxon>
    </lineage>
</organism>